<name>SPEA_DEIRA</name>
<proteinExistence type="inferred from homology"/>
<keyword id="KW-0210">Decarboxylase</keyword>
<keyword id="KW-0456">Lyase</keyword>
<keyword id="KW-0460">Magnesium</keyword>
<keyword id="KW-0479">Metal-binding</keyword>
<keyword id="KW-0620">Polyamine biosynthesis</keyword>
<keyword id="KW-0663">Pyridoxal phosphate</keyword>
<keyword id="KW-1185">Reference proteome</keyword>
<keyword id="KW-0745">Spermidine biosynthesis</keyword>
<gene>
    <name evidence="1" type="primary">speA</name>
    <name type="ordered locus">DR_0243</name>
</gene>
<protein>
    <recommendedName>
        <fullName evidence="1">Biosynthetic arginine decarboxylase</fullName>
        <shortName evidence="1">ADC</shortName>
        <ecNumber evidence="1">4.1.1.19</ecNumber>
    </recommendedName>
</protein>
<evidence type="ECO:0000255" key="1">
    <source>
        <dbReference type="HAMAP-Rule" id="MF_01417"/>
    </source>
</evidence>
<comment type="function">
    <text evidence="1">Catalyzes the biosynthesis of agmatine from arginine.</text>
</comment>
<comment type="catalytic activity">
    <reaction evidence="1">
        <text>L-arginine + H(+) = agmatine + CO2</text>
        <dbReference type="Rhea" id="RHEA:17641"/>
        <dbReference type="ChEBI" id="CHEBI:15378"/>
        <dbReference type="ChEBI" id="CHEBI:16526"/>
        <dbReference type="ChEBI" id="CHEBI:32682"/>
        <dbReference type="ChEBI" id="CHEBI:58145"/>
        <dbReference type="EC" id="4.1.1.19"/>
    </reaction>
</comment>
<comment type="cofactor">
    <cofactor evidence="1">
        <name>Mg(2+)</name>
        <dbReference type="ChEBI" id="CHEBI:18420"/>
    </cofactor>
</comment>
<comment type="cofactor">
    <cofactor evidence="1">
        <name>pyridoxal 5'-phosphate</name>
        <dbReference type="ChEBI" id="CHEBI:597326"/>
    </cofactor>
</comment>
<comment type="similarity">
    <text evidence="1">Belongs to the Orn/Lys/Arg decarboxylase class-II family. SpeA subfamily.</text>
</comment>
<reference key="1">
    <citation type="journal article" date="1999" name="Science">
        <title>Genome sequence of the radioresistant bacterium Deinococcus radiodurans R1.</title>
        <authorList>
            <person name="White O."/>
            <person name="Eisen J.A."/>
            <person name="Heidelberg J.F."/>
            <person name="Hickey E.K."/>
            <person name="Peterson J.D."/>
            <person name="Dodson R.J."/>
            <person name="Haft D.H."/>
            <person name="Gwinn M.L."/>
            <person name="Nelson W.C."/>
            <person name="Richardson D.L."/>
            <person name="Moffat K.S."/>
            <person name="Qin H."/>
            <person name="Jiang L."/>
            <person name="Pamphile W."/>
            <person name="Crosby M."/>
            <person name="Shen M."/>
            <person name="Vamathevan J.J."/>
            <person name="Lam P."/>
            <person name="McDonald L.A."/>
            <person name="Utterback T.R."/>
            <person name="Zalewski C."/>
            <person name="Makarova K.S."/>
            <person name="Aravind L."/>
            <person name="Daly M.J."/>
            <person name="Minton K.W."/>
            <person name="Fleischmann R.D."/>
            <person name="Ketchum K.A."/>
            <person name="Nelson K.E."/>
            <person name="Salzberg S.L."/>
            <person name="Smith H.O."/>
            <person name="Venter J.C."/>
            <person name="Fraser C.M."/>
        </authorList>
    </citation>
    <scope>NUCLEOTIDE SEQUENCE [LARGE SCALE GENOMIC DNA]</scope>
    <source>
        <strain>ATCC 13939 / DSM 20539 / JCM 16871 / CCUG 27074 / LMG 4051 / NBRC 15346 / NCIMB 9279 / VKM B-1422 / R1</strain>
    </source>
</reference>
<organism>
    <name type="scientific">Deinococcus radiodurans (strain ATCC 13939 / DSM 20539 / JCM 16871 / CCUG 27074 / LMG 4051 / NBRC 15346 / NCIMB 9279 / VKM B-1422 / R1)</name>
    <dbReference type="NCBI Taxonomy" id="243230"/>
    <lineage>
        <taxon>Bacteria</taxon>
        <taxon>Thermotogati</taxon>
        <taxon>Deinococcota</taxon>
        <taxon>Deinococci</taxon>
        <taxon>Deinococcales</taxon>
        <taxon>Deinococcaceae</taxon>
        <taxon>Deinococcus</taxon>
    </lineage>
</organism>
<feature type="chain" id="PRO_0000149959" description="Biosynthetic arginine decarboxylase">
    <location>
        <begin position="1"/>
        <end position="662"/>
    </location>
</feature>
<feature type="binding site" evidence="1">
    <location>
        <begin position="308"/>
        <end position="318"/>
    </location>
    <ligand>
        <name>substrate</name>
    </ligand>
</feature>
<feature type="modified residue" description="N6-(pyridoxal phosphate)lysine" evidence="1">
    <location>
        <position position="126"/>
    </location>
</feature>
<dbReference type="EC" id="4.1.1.19" evidence="1"/>
<dbReference type="EMBL" id="AE000513">
    <property type="protein sequence ID" value="AAF09826.1"/>
    <property type="molecule type" value="Genomic_DNA"/>
</dbReference>
<dbReference type="PIR" id="B75544">
    <property type="entry name" value="B75544"/>
</dbReference>
<dbReference type="RefSeq" id="NP_293967.1">
    <property type="nucleotide sequence ID" value="NC_001263.1"/>
</dbReference>
<dbReference type="SMR" id="Q9RXR4"/>
<dbReference type="STRING" id="243230.DR_0243"/>
<dbReference type="PaxDb" id="243230-DR_0243"/>
<dbReference type="EnsemblBacteria" id="AAF09826">
    <property type="protein sequence ID" value="AAF09826"/>
    <property type="gene ID" value="DR_0243"/>
</dbReference>
<dbReference type="KEGG" id="dra:DR_0243"/>
<dbReference type="PATRIC" id="fig|243230.17.peg.407"/>
<dbReference type="eggNOG" id="COG1166">
    <property type="taxonomic scope" value="Bacteria"/>
</dbReference>
<dbReference type="HOGENOM" id="CLU_027243_1_0_0"/>
<dbReference type="InParanoid" id="Q9RXR4"/>
<dbReference type="OrthoDB" id="9802658at2"/>
<dbReference type="Proteomes" id="UP000002524">
    <property type="component" value="Chromosome 1"/>
</dbReference>
<dbReference type="GO" id="GO:0008792">
    <property type="term" value="F:arginine decarboxylase activity"/>
    <property type="evidence" value="ECO:0007669"/>
    <property type="project" value="UniProtKB-UniRule"/>
</dbReference>
<dbReference type="GO" id="GO:0046872">
    <property type="term" value="F:metal ion binding"/>
    <property type="evidence" value="ECO:0007669"/>
    <property type="project" value="UniProtKB-KW"/>
</dbReference>
<dbReference type="GO" id="GO:0006527">
    <property type="term" value="P:arginine catabolic process"/>
    <property type="evidence" value="ECO:0007669"/>
    <property type="project" value="InterPro"/>
</dbReference>
<dbReference type="GO" id="GO:0008295">
    <property type="term" value="P:spermidine biosynthetic process"/>
    <property type="evidence" value="ECO:0007669"/>
    <property type="project" value="UniProtKB-UniRule"/>
</dbReference>
<dbReference type="CDD" id="cd06830">
    <property type="entry name" value="PLPDE_III_ADC"/>
    <property type="match status" value="1"/>
</dbReference>
<dbReference type="FunFam" id="1.20.58.930:FF:000002">
    <property type="entry name" value="Biosynthetic arginine decarboxylase"/>
    <property type="match status" value="1"/>
</dbReference>
<dbReference type="FunFam" id="3.20.20.10:FF:000001">
    <property type="entry name" value="Biosynthetic arginine decarboxylase"/>
    <property type="match status" value="1"/>
</dbReference>
<dbReference type="Gene3D" id="1.20.58.930">
    <property type="match status" value="1"/>
</dbReference>
<dbReference type="Gene3D" id="3.20.20.10">
    <property type="entry name" value="Alanine racemase"/>
    <property type="match status" value="1"/>
</dbReference>
<dbReference type="Gene3D" id="2.40.37.10">
    <property type="entry name" value="Lyase, Ornithine Decarboxylase, Chain A, domain 1"/>
    <property type="match status" value="1"/>
</dbReference>
<dbReference type="HAMAP" id="MF_01417">
    <property type="entry name" value="SpeA"/>
    <property type="match status" value="1"/>
</dbReference>
<dbReference type="InterPro" id="IPR009006">
    <property type="entry name" value="Ala_racemase/Decarboxylase_C"/>
</dbReference>
<dbReference type="InterPro" id="IPR040634">
    <property type="entry name" value="Arg_decarb_HB"/>
</dbReference>
<dbReference type="InterPro" id="IPR041128">
    <property type="entry name" value="Arg_decarbox_C"/>
</dbReference>
<dbReference type="InterPro" id="IPR002985">
    <property type="entry name" value="Arg_decrbxlase"/>
</dbReference>
<dbReference type="InterPro" id="IPR022644">
    <property type="entry name" value="De-COase2_N"/>
</dbReference>
<dbReference type="InterPro" id="IPR022653">
    <property type="entry name" value="De-COase2_pyr-phos_BS"/>
</dbReference>
<dbReference type="InterPro" id="IPR000183">
    <property type="entry name" value="Orn/DAP/Arg_de-COase"/>
</dbReference>
<dbReference type="InterPro" id="IPR029066">
    <property type="entry name" value="PLP-binding_barrel"/>
</dbReference>
<dbReference type="NCBIfam" id="NF003763">
    <property type="entry name" value="PRK05354.1"/>
    <property type="match status" value="1"/>
</dbReference>
<dbReference type="NCBIfam" id="TIGR01273">
    <property type="entry name" value="speA"/>
    <property type="match status" value="1"/>
</dbReference>
<dbReference type="PANTHER" id="PTHR43295">
    <property type="entry name" value="ARGININE DECARBOXYLASE"/>
    <property type="match status" value="1"/>
</dbReference>
<dbReference type="PANTHER" id="PTHR43295:SF9">
    <property type="entry name" value="BIOSYNTHETIC ARGININE DECARBOXYLASE"/>
    <property type="match status" value="1"/>
</dbReference>
<dbReference type="Pfam" id="PF17810">
    <property type="entry name" value="Arg_decarb_HB"/>
    <property type="match status" value="1"/>
</dbReference>
<dbReference type="Pfam" id="PF17944">
    <property type="entry name" value="Arg_decarbox_C"/>
    <property type="match status" value="1"/>
</dbReference>
<dbReference type="Pfam" id="PF02784">
    <property type="entry name" value="Orn_Arg_deC_N"/>
    <property type="match status" value="1"/>
</dbReference>
<dbReference type="PIRSF" id="PIRSF001336">
    <property type="entry name" value="Arg_decrbxlase"/>
    <property type="match status" value="1"/>
</dbReference>
<dbReference type="PRINTS" id="PR01180">
    <property type="entry name" value="ARGDCRBXLASE"/>
</dbReference>
<dbReference type="PRINTS" id="PR01179">
    <property type="entry name" value="ODADCRBXLASE"/>
</dbReference>
<dbReference type="SUPFAM" id="SSF50621">
    <property type="entry name" value="Alanine racemase C-terminal domain-like"/>
    <property type="match status" value="1"/>
</dbReference>
<dbReference type="SUPFAM" id="SSF51419">
    <property type="entry name" value="PLP-binding barrel"/>
    <property type="match status" value="1"/>
</dbReference>
<dbReference type="PROSITE" id="PS00878">
    <property type="entry name" value="ODR_DC_2_1"/>
    <property type="match status" value="1"/>
</dbReference>
<dbReference type="PROSITE" id="PS00879">
    <property type="entry name" value="ODR_DC_2_2"/>
    <property type="match status" value="1"/>
</dbReference>
<sequence>MCPARLRTPRTASLPTHRRSAMTTANPLNTSFTSADAAELYQVPNWSGGWFRVSDKGLMEATPAPGLHASLRAIVDEIVDRGESLPVILRFPQVLAGRVKHLNEAFQAAINEYNYSGHYQGVFPIKVNQRRAVVETVAAAGYDYAHGLEAGSKAELALCLAQKMHPDALLCCNGFKDDGFIKLALWGRTLGKNVVITIEKFTELDRILKQAKALGVKPAVGVRFKLHARGSGQWEESGGDQAKFGLNAYELLRVVERLKEENMLDSLVMLHTHIGSQITDIRRVKVAVREAAQTYAGLIAAGADLKYLNVGGGLGVDYDGSKTTFYASMNYTVKEYAADIVYTVQEVCKAREVPEPVIVSESGRALTAHHAVLILPVVDVTGPTRNLEDQELTVPGEDSHQIVRDMYETLENISMRNYRESYNDAVGDKQTLHNLFDLGYVTLEDRARGEALFNAILRKIAKLIQGEKYVPDELEDLQKVLADKFICNFSLFQSLPDNWAIGALFPIVPLDRLNEQPTRQATLVDITCDSDGKVEKFIDLRDVKATLPLHEPGDRPYYLGAFLMGAYQDVLGSAHNLFGKVSEAHVTVRPGGRFNIDLFVRGQKARRMIESMGYEEPMLRDAIEDQADAAIGRGTLTQEQEHELLEDYGEELLGYTYLEYES</sequence>
<accession>Q9RXR4</accession>